<evidence type="ECO:0000255" key="1"/>
<evidence type="ECO:0000269" key="2">
    <source>
    </source>
</evidence>
<evidence type="ECO:0000303" key="3">
    <source>
    </source>
</evidence>
<evidence type="ECO:0000305" key="4"/>
<organism>
    <name type="scientific">Taxus canadensis</name>
    <name type="common">Canadian yew</name>
    <dbReference type="NCBI Taxonomy" id="88032"/>
    <lineage>
        <taxon>Eukaryota</taxon>
        <taxon>Viridiplantae</taxon>
        <taxon>Streptophyta</taxon>
        <taxon>Embryophyta</taxon>
        <taxon>Tracheophyta</taxon>
        <taxon>Spermatophyta</taxon>
        <taxon>Pinopsida</taxon>
        <taxon>Pinidae</taxon>
        <taxon>Conifers II</taxon>
        <taxon>Cupressales</taxon>
        <taxon>Taxaceae</taxon>
        <taxon>Taxus</taxon>
    </lineage>
</organism>
<name>DBNBT_TAXCA</name>
<protein>
    <recommendedName>
        <fullName evidence="3">3'-N-debenzoyl-2'-deoxytaxol N-benzoyltransferase</fullName>
        <shortName evidence="3">DBTNBT</shortName>
        <ecNumber evidence="2">2.3.1.321</ecNumber>
    </recommendedName>
</protein>
<feature type="chain" id="PRO_0000147361" description="3'-N-debenzoyl-2'-deoxytaxol N-benzoyltransferase">
    <location>
        <begin position="1"/>
        <end position="441"/>
    </location>
</feature>
<feature type="active site" description="Proton acceptor" evidence="1">
    <location>
        <position position="163"/>
    </location>
</feature>
<feature type="active site" description="Proton acceptor" evidence="1">
    <location>
        <position position="373"/>
    </location>
</feature>
<proteinExistence type="evidence at protein level"/>
<gene>
    <name evidence="3" type="primary">TAX10</name>
</gene>
<accession>Q8LL69</accession>
<dbReference type="EC" id="2.3.1.321" evidence="2"/>
<dbReference type="EMBL" id="AF466397">
    <property type="protein sequence ID" value="AAM75818.1"/>
    <property type="molecule type" value="mRNA"/>
</dbReference>
<dbReference type="SMR" id="Q8LL69"/>
<dbReference type="KEGG" id="ag:AAM75818"/>
<dbReference type="BioCyc" id="MetaCyc:MONOMER-13418"/>
<dbReference type="UniPathway" id="UPA00842"/>
<dbReference type="GO" id="GO:0102923">
    <property type="term" value="F:3'-N-debenzoyl-2'-deoxytaxol N-benzoyltransferase activity"/>
    <property type="evidence" value="ECO:0007669"/>
    <property type="project" value="RHEA"/>
</dbReference>
<dbReference type="GO" id="GO:0042617">
    <property type="term" value="P:paclitaxel biosynthetic process"/>
    <property type="evidence" value="ECO:0007669"/>
    <property type="project" value="UniProtKB-UniPathway"/>
</dbReference>
<dbReference type="Gene3D" id="3.30.559.10">
    <property type="entry name" value="Chloramphenicol acetyltransferase-like domain"/>
    <property type="match status" value="2"/>
</dbReference>
<dbReference type="InterPro" id="IPR023213">
    <property type="entry name" value="CAT-like_dom_sf"/>
</dbReference>
<dbReference type="InterPro" id="IPR050898">
    <property type="entry name" value="Plant_acyltransferase"/>
</dbReference>
<dbReference type="PANTHER" id="PTHR31147">
    <property type="entry name" value="ACYL TRANSFERASE 4"/>
    <property type="match status" value="1"/>
</dbReference>
<dbReference type="PANTHER" id="PTHR31147:SF33">
    <property type="entry name" value="N-HYDROXYCINNAMOYL_BENZOYLTRANSFERASE, PUTATIVE-RELATED"/>
    <property type="match status" value="1"/>
</dbReference>
<dbReference type="Pfam" id="PF02458">
    <property type="entry name" value="Transferase"/>
    <property type="match status" value="1"/>
</dbReference>
<keyword id="KW-0012">Acyltransferase</keyword>
<keyword id="KW-0876">Taxol biosynthesis</keyword>
<keyword id="KW-0808">Transferase</keyword>
<comment type="function">
    <text evidence="2">Catalyzes the stereoselective coupling of the surrogate substrate N-debenzoyl-(3'RS)-2'-deoxytaxol with benzoyl-CoA to form predominantly one 3'-epimer of 2'-deoxytaxol (PubMed:12089320). This enzymatic reaction constitutes the final acylation in the taxol biosynthetic pathway (PubMed:12089320).</text>
</comment>
<comment type="catalytic activity">
    <reaction evidence="2">
        <text>3'-N-debenzoyltaxol + benzoyl-CoA = paclitaxel + CoA + H(+)</text>
        <dbReference type="Rhea" id="RHEA:33687"/>
        <dbReference type="ChEBI" id="CHEBI:15378"/>
        <dbReference type="ChEBI" id="CHEBI:45863"/>
        <dbReference type="ChEBI" id="CHEBI:57287"/>
        <dbReference type="ChEBI" id="CHEBI:57369"/>
        <dbReference type="ChEBI" id="CHEBI:63863"/>
        <dbReference type="EC" id="2.3.1.321"/>
    </reaction>
    <physiologicalReaction direction="left-to-right" evidence="2">
        <dbReference type="Rhea" id="RHEA:33688"/>
    </physiologicalReaction>
</comment>
<comment type="biophysicochemical properties">
    <kinetics>
        <KM evidence="2">0.45 mM for 3'-N-debenzoyltaxol</KM>
        <KM evidence="2">0.41 mM for benzoyl-CoA</KM>
    </kinetics>
    <phDependence>
        <text evidence="2">Optimum pH is 8.0.</text>
    </phDependence>
</comment>
<comment type="pathway">
    <text evidence="4">Alkaloid biosynthesis; taxol biosynthesis.</text>
</comment>
<comment type="similarity">
    <text evidence="4">Belongs to the plant acyltransferase family.</text>
</comment>
<reference key="1">
    <citation type="journal article" date="2002" name="Proc. Natl. Acad. Sci. U.S.A.">
        <title>The final acylation step in taxol biosynthesis: cloning of the taxoid C13-side-chain N-benzoyltransferase from Taxus.</title>
        <authorList>
            <person name="Walker K."/>
            <person name="Long R."/>
            <person name="Croteau R.B."/>
        </authorList>
    </citation>
    <scope>NUCLEOTIDE SEQUENCE [MRNA]</scope>
    <scope>FUNCTION</scope>
    <scope>CATALYTIC ACTIVITY</scope>
    <scope>BIOPHYSICOCHEMICAL PROPERTIES</scope>
</reference>
<sequence length="441" mass="49041">MEKAGSTDFHVKKFDPVMVAPSLPSPKATVQLSVVDSLTICRGIFNTLLVFNAPDNISADPVKIIREALSKVLVYYFPLAGRLRSKEIGELEVECTGDGALFVEAMVEDTISVLRDLDDLNPSFQQLVFWHPLDTAIEDLHLVIVQVTRFTCGGIAVGVTLPHSVCDGRGAAQFVTALAEMARGEVKPSLEPIWNRELLNPEDPLHLQLNQFDSICPPPMLEELGQASFVINVDTIEYMKQCVMEECNEFCSSFEVVAALVWIARTKALQIPHTENVKLLFAMDLRKLFNPPLPNGYYGNAIGTAYAMDNVQDLLNGSLLRAIMIIKKAKADLKDNYSRSRVVTNPYSLDVNKKSDNILALSDWRRLGFYEADFGWGGPLNVSSLQRLENGLPMFSTFLYLLPAKNKSDGIKLLLSCMPPTTLKSFKIVMEAMIEKYVSKV</sequence>